<sequence>MTKIVVIAGPTASGKSDLAISVAQRFNGEIVSADAMQIYRGLDIGTAKVTKAERELVPHHLIDIVDMTDKFSVAEFVTRADQVINDIAKRGKLPVIAGGTGFYVKALLGQQPLDFVASDEAEVALLKQKSLPTLVTMLKAADTILASRVDLNNKQRVIRAIQIARHGKRQEDISRPTYDALIVGIDWPREILYERINRRAQKMLDDGLLSEVEHIMSVGGESIQAGKAIGYKEFFPYIRGEVTREQALLAVQQDSRRYAKRQLTYLRHQIPGLIWLHGTDAATKLTSEVKAWLD</sequence>
<comment type="function">
    <text evidence="1">Catalyzes the transfer of a dimethylallyl group onto the adenine at position 37 in tRNAs that read codons beginning with uridine, leading to the formation of N6-(dimethylallyl)adenosine (i(6)A).</text>
</comment>
<comment type="catalytic activity">
    <reaction evidence="1">
        <text>adenosine(37) in tRNA + dimethylallyl diphosphate = N(6)-dimethylallyladenosine(37) in tRNA + diphosphate</text>
        <dbReference type="Rhea" id="RHEA:26482"/>
        <dbReference type="Rhea" id="RHEA-COMP:10162"/>
        <dbReference type="Rhea" id="RHEA-COMP:10375"/>
        <dbReference type="ChEBI" id="CHEBI:33019"/>
        <dbReference type="ChEBI" id="CHEBI:57623"/>
        <dbReference type="ChEBI" id="CHEBI:74411"/>
        <dbReference type="ChEBI" id="CHEBI:74415"/>
        <dbReference type="EC" id="2.5.1.75"/>
    </reaction>
</comment>
<comment type="cofactor">
    <cofactor evidence="1">
        <name>Mg(2+)</name>
        <dbReference type="ChEBI" id="CHEBI:18420"/>
    </cofactor>
</comment>
<comment type="subunit">
    <text evidence="1">Monomer.</text>
</comment>
<comment type="similarity">
    <text evidence="1">Belongs to the IPP transferase family.</text>
</comment>
<accession>B1MXL9</accession>
<proteinExistence type="inferred from homology"/>
<name>MIAA_LEUCK</name>
<keyword id="KW-0067">ATP-binding</keyword>
<keyword id="KW-0460">Magnesium</keyword>
<keyword id="KW-0547">Nucleotide-binding</keyword>
<keyword id="KW-1185">Reference proteome</keyword>
<keyword id="KW-0808">Transferase</keyword>
<keyword id="KW-0819">tRNA processing</keyword>
<evidence type="ECO:0000255" key="1">
    <source>
        <dbReference type="HAMAP-Rule" id="MF_00185"/>
    </source>
</evidence>
<protein>
    <recommendedName>
        <fullName evidence="1">tRNA dimethylallyltransferase</fullName>
        <ecNumber evidence="1">2.5.1.75</ecNumber>
    </recommendedName>
    <alternativeName>
        <fullName evidence="1">Dimethylallyl diphosphate:tRNA dimethylallyltransferase</fullName>
        <shortName evidence="1">DMAPP:tRNA dimethylallyltransferase</shortName>
        <shortName evidence="1">DMATase</shortName>
    </alternativeName>
    <alternativeName>
        <fullName evidence="1">Isopentenyl-diphosphate:tRNA isopentenyltransferase</fullName>
        <shortName evidence="1">IPP transferase</shortName>
        <shortName evidence="1">IPPT</shortName>
        <shortName evidence="1">IPTase</shortName>
    </alternativeName>
</protein>
<dbReference type="EC" id="2.5.1.75" evidence="1"/>
<dbReference type="EMBL" id="DQ489736">
    <property type="protein sequence ID" value="ACA82271.1"/>
    <property type="molecule type" value="Genomic_DNA"/>
</dbReference>
<dbReference type="RefSeq" id="WP_004909098.1">
    <property type="nucleotide sequence ID" value="NC_010471.1"/>
</dbReference>
<dbReference type="SMR" id="B1MXL9"/>
<dbReference type="STRING" id="349519.LCK_00438"/>
<dbReference type="KEGG" id="lci:LCK_00438"/>
<dbReference type="eggNOG" id="COG0324">
    <property type="taxonomic scope" value="Bacteria"/>
</dbReference>
<dbReference type="HOGENOM" id="CLU_032616_0_1_9"/>
<dbReference type="OrthoDB" id="9776390at2"/>
<dbReference type="Proteomes" id="UP000002166">
    <property type="component" value="Chromosome"/>
</dbReference>
<dbReference type="GO" id="GO:0005524">
    <property type="term" value="F:ATP binding"/>
    <property type="evidence" value="ECO:0007669"/>
    <property type="project" value="UniProtKB-UniRule"/>
</dbReference>
<dbReference type="GO" id="GO:0052381">
    <property type="term" value="F:tRNA dimethylallyltransferase activity"/>
    <property type="evidence" value="ECO:0007669"/>
    <property type="project" value="UniProtKB-UniRule"/>
</dbReference>
<dbReference type="GO" id="GO:0006400">
    <property type="term" value="P:tRNA modification"/>
    <property type="evidence" value="ECO:0007669"/>
    <property type="project" value="TreeGrafter"/>
</dbReference>
<dbReference type="Gene3D" id="1.10.20.140">
    <property type="match status" value="1"/>
</dbReference>
<dbReference type="Gene3D" id="3.40.50.300">
    <property type="entry name" value="P-loop containing nucleotide triphosphate hydrolases"/>
    <property type="match status" value="1"/>
</dbReference>
<dbReference type="HAMAP" id="MF_00185">
    <property type="entry name" value="IPP_trans"/>
    <property type="match status" value="1"/>
</dbReference>
<dbReference type="InterPro" id="IPR039657">
    <property type="entry name" value="Dimethylallyltransferase"/>
</dbReference>
<dbReference type="InterPro" id="IPR018022">
    <property type="entry name" value="IPT"/>
</dbReference>
<dbReference type="InterPro" id="IPR027417">
    <property type="entry name" value="P-loop_NTPase"/>
</dbReference>
<dbReference type="NCBIfam" id="TIGR00174">
    <property type="entry name" value="miaA"/>
    <property type="match status" value="1"/>
</dbReference>
<dbReference type="PANTHER" id="PTHR11088">
    <property type="entry name" value="TRNA DIMETHYLALLYLTRANSFERASE"/>
    <property type="match status" value="1"/>
</dbReference>
<dbReference type="PANTHER" id="PTHR11088:SF60">
    <property type="entry name" value="TRNA DIMETHYLALLYLTRANSFERASE"/>
    <property type="match status" value="1"/>
</dbReference>
<dbReference type="Pfam" id="PF01715">
    <property type="entry name" value="IPPT"/>
    <property type="match status" value="1"/>
</dbReference>
<dbReference type="SUPFAM" id="SSF52540">
    <property type="entry name" value="P-loop containing nucleoside triphosphate hydrolases"/>
    <property type="match status" value="2"/>
</dbReference>
<feature type="chain" id="PRO_1000098670" description="tRNA dimethylallyltransferase">
    <location>
        <begin position="1"/>
        <end position="294"/>
    </location>
</feature>
<feature type="region of interest" description="Interaction with substrate tRNA" evidence="1">
    <location>
        <begin position="155"/>
        <end position="159"/>
    </location>
</feature>
<feature type="binding site" evidence="1">
    <location>
        <begin position="9"/>
        <end position="16"/>
    </location>
    <ligand>
        <name>ATP</name>
        <dbReference type="ChEBI" id="CHEBI:30616"/>
    </ligand>
</feature>
<feature type="binding site" evidence="1">
    <location>
        <begin position="11"/>
        <end position="16"/>
    </location>
    <ligand>
        <name>substrate</name>
    </ligand>
</feature>
<feature type="site" description="Interaction with substrate tRNA" evidence="1">
    <location>
        <position position="100"/>
    </location>
</feature>
<reference key="1">
    <citation type="journal article" date="2008" name="J. Bacteriol.">
        <title>Complete genome sequence of Leuconostoc citreum KM20.</title>
        <authorList>
            <person name="Kim J.F."/>
            <person name="Jeong H."/>
            <person name="Lee J.-S."/>
            <person name="Choi S.-H."/>
            <person name="Ha M."/>
            <person name="Hur C.-G."/>
            <person name="Kim J.-S."/>
            <person name="Lee S."/>
            <person name="Park H.-S."/>
            <person name="Park Y.-H."/>
            <person name="Oh T.K."/>
        </authorList>
    </citation>
    <scope>NUCLEOTIDE SEQUENCE [LARGE SCALE GENOMIC DNA]</scope>
    <source>
        <strain>KM20</strain>
    </source>
</reference>
<organism>
    <name type="scientific">Leuconostoc citreum (strain KM20)</name>
    <dbReference type="NCBI Taxonomy" id="349519"/>
    <lineage>
        <taxon>Bacteria</taxon>
        <taxon>Bacillati</taxon>
        <taxon>Bacillota</taxon>
        <taxon>Bacilli</taxon>
        <taxon>Lactobacillales</taxon>
        <taxon>Lactobacillaceae</taxon>
        <taxon>Leuconostoc</taxon>
    </lineage>
</organism>
<gene>
    <name evidence="1" type="primary">miaA</name>
    <name type="ordered locus">LCK_00438</name>
</gene>